<organism>
    <name type="scientific">Sorangium cellulosum (strain So ce56)</name>
    <name type="common">Polyangium cellulosum (strain So ce56)</name>
    <dbReference type="NCBI Taxonomy" id="448385"/>
    <lineage>
        <taxon>Bacteria</taxon>
        <taxon>Pseudomonadati</taxon>
        <taxon>Myxococcota</taxon>
        <taxon>Polyangia</taxon>
        <taxon>Polyangiales</taxon>
        <taxon>Polyangiaceae</taxon>
        <taxon>Sorangium</taxon>
    </lineage>
</organism>
<comment type="function">
    <text evidence="1">Involved in unsaturated fatty acids biosynthesis. Catalyzes the dehydration of short chain beta-hydroxyacyl-ACPs and long chain saturated and unsaturated beta-hydroxyacyl-ACPs.</text>
</comment>
<comment type="catalytic activity">
    <reaction evidence="1">
        <text>a (3R)-hydroxyacyl-[ACP] = a (2E)-enoyl-[ACP] + H2O</text>
        <dbReference type="Rhea" id="RHEA:13097"/>
        <dbReference type="Rhea" id="RHEA-COMP:9925"/>
        <dbReference type="Rhea" id="RHEA-COMP:9945"/>
        <dbReference type="ChEBI" id="CHEBI:15377"/>
        <dbReference type="ChEBI" id="CHEBI:78784"/>
        <dbReference type="ChEBI" id="CHEBI:78827"/>
        <dbReference type="EC" id="4.2.1.59"/>
    </reaction>
</comment>
<comment type="subcellular location">
    <subcellularLocation>
        <location evidence="1">Cytoplasm</location>
    </subcellularLocation>
</comment>
<comment type="similarity">
    <text evidence="1">Belongs to the thioester dehydratase family. FabZ subfamily.</text>
</comment>
<feature type="chain" id="PRO_1000080452" description="3-hydroxyacyl-[acyl-carrier-protein] dehydratase FabZ">
    <location>
        <begin position="1"/>
        <end position="155"/>
    </location>
</feature>
<feature type="active site" evidence="1">
    <location>
        <position position="57"/>
    </location>
</feature>
<protein>
    <recommendedName>
        <fullName evidence="1">3-hydroxyacyl-[acyl-carrier-protein] dehydratase FabZ</fullName>
        <ecNumber evidence="1">4.2.1.59</ecNumber>
    </recommendedName>
    <alternativeName>
        <fullName evidence="1">(3R)-hydroxymyristoyl-[acyl-carrier-protein] dehydratase</fullName>
        <shortName evidence="1">(3R)-hydroxymyristoyl-ACP dehydrase</shortName>
    </alternativeName>
    <alternativeName>
        <fullName evidence="1">Beta-hydroxyacyl-ACP dehydratase</fullName>
    </alternativeName>
</protein>
<proteinExistence type="inferred from homology"/>
<dbReference type="EC" id="4.2.1.59" evidence="1"/>
<dbReference type="EMBL" id="AM746676">
    <property type="protein sequence ID" value="CAN93018.1"/>
    <property type="molecule type" value="Genomic_DNA"/>
</dbReference>
<dbReference type="RefSeq" id="WP_012235490.1">
    <property type="nucleotide sequence ID" value="NC_010162.1"/>
</dbReference>
<dbReference type="SMR" id="A9GEI9"/>
<dbReference type="STRING" id="448385.sce2859"/>
<dbReference type="KEGG" id="scl:sce2859"/>
<dbReference type="eggNOG" id="COG0764">
    <property type="taxonomic scope" value="Bacteria"/>
</dbReference>
<dbReference type="HOGENOM" id="CLU_078912_1_0_7"/>
<dbReference type="OrthoDB" id="9772788at2"/>
<dbReference type="BioCyc" id="SCEL448385:SCE_RS14665-MONOMER"/>
<dbReference type="Proteomes" id="UP000002139">
    <property type="component" value="Chromosome"/>
</dbReference>
<dbReference type="GO" id="GO:0005737">
    <property type="term" value="C:cytoplasm"/>
    <property type="evidence" value="ECO:0007669"/>
    <property type="project" value="UniProtKB-SubCell"/>
</dbReference>
<dbReference type="GO" id="GO:0016020">
    <property type="term" value="C:membrane"/>
    <property type="evidence" value="ECO:0007669"/>
    <property type="project" value="GOC"/>
</dbReference>
<dbReference type="GO" id="GO:0019171">
    <property type="term" value="F:(3R)-hydroxyacyl-[acyl-carrier-protein] dehydratase activity"/>
    <property type="evidence" value="ECO:0007669"/>
    <property type="project" value="UniProtKB-EC"/>
</dbReference>
<dbReference type="GO" id="GO:0006633">
    <property type="term" value="P:fatty acid biosynthetic process"/>
    <property type="evidence" value="ECO:0007669"/>
    <property type="project" value="UniProtKB-UniRule"/>
</dbReference>
<dbReference type="GO" id="GO:0009245">
    <property type="term" value="P:lipid A biosynthetic process"/>
    <property type="evidence" value="ECO:0007669"/>
    <property type="project" value="UniProtKB-UniRule"/>
</dbReference>
<dbReference type="CDD" id="cd01288">
    <property type="entry name" value="FabZ"/>
    <property type="match status" value="1"/>
</dbReference>
<dbReference type="FunFam" id="3.10.129.10:FF:000001">
    <property type="entry name" value="3-hydroxyacyl-[acyl-carrier-protein] dehydratase FabZ"/>
    <property type="match status" value="1"/>
</dbReference>
<dbReference type="Gene3D" id="3.10.129.10">
    <property type="entry name" value="Hotdog Thioesterase"/>
    <property type="match status" value="1"/>
</dbReference>
<dbReference type="HAMAP" id="MF_00406">
    <property type="entry name" value="FabZ"/>
    <property type="match status" value="1"/>
</dbReference>
<dbReference type="InterPro" id="IPR013114">
    <property type="entry name" value="FabA_FabZ"/>
</dbReference>
<dbReference type="InterPro" id="IPR010084">
    <property type="entry name" value="FabZ"/>
</dbReference>
<dbReference type="InterPro" id="IPR029069">
    <property type="entry name" value="HotDog_dom_sf"/>
</dbReference>
<dbReference type="NCBIfam" id="TIGR01750">
    <property type="entry name" value="fabZ"/>
    <property type="match status" value="1"/>
</dbReference>
<dbReference type="NCBIfam" id="NF000582">
    <property type="entry name" value="PRK00006.1"/>
    <property type="match status" value="1"/>
</dbReference>
<dbReference type="PANTHER" id="PTHR30272">
    <property type="entry name" value="3-HYDROXYACYL-[ACYL-CARRIER-PROTEIN] DEHYDRATASE"/>
    <property type="match status" value="1"/>
</dbReference>
<dbReference type="PANTHER" id="PTHR30272:SF1">
    <property type="entry name" value="3-HYDROXYACYL-[ACYL-CARRIER-PROTEIN] DEHYDRATASE"/>
    <property type="match status" value="1"/>
</dbReference>
<dbReference type="Pfam" id="PF07977">
    <property type="entry name" value="FabA"/>
    <property type="match status" value="1"/>
</dbReference>
<dbReference type="SUPFAM" id="SSF54637">
    <property type="entry name" value="Thioesterase/thiol ester dehydrase-isomerase"/>
    <property type="match status" value="1"/>
</dbReference>
<reference key="1">
    <citation type="journal article" date="2007" name="Nat. Biotechnol.">
        <title>Complete genome sequence of the myxobacterium Sorangium cellulosum.</title>
        <authorList>
            <person name="Schneiker S."/>
            <person name="Perlova O."/>
            <person name="Kaiser O."/>
            <person name="Gerth K."/>
            <person name="Alici A."/>
            <person name="Altmeyer M.O."/>
            <person name="Bartels D."/>
            <person name="Bekel T."/>
            <person name="Beyer S."/>
            <person name="Bode E."/>
            <person name="Bode H.B."/>
            <person name="Bolten C.J."/>
            <person name="Choudhuri J.V."/>
            <person name="Doss S."/>
            <person name="Elnakady Y.A."/>
            <person name="Frank B."/>
            <person name="Gaigalat L."/>
            <person name="Goesmann A."/>
            <person name="Groeger C."/>
            <person name="Gross F."/>
            <person name="Jelsbak L."/>
            <person name="Jelsbak L."/>
            <person name="Kalinowski J."/>
            <person name="Kegler C."/>
            <person name="Knauber T."/>
            <person name="Konietzny S."/>
            <person name="Kopp M."/>
            <person name="Krause L."/>
            <person name="Krug D."/>
            <person name="Linke B."/>
            <person name="Mahmud T."/>
            <person name="Martinez-Arias R."/>
            <person name="McHardy A.C."/>
            <person name="Merai M."/>
            <person name="Meyer F."/>
            <person name="Mormann S."/>
            <person name="Munoz-Dorado J."/>
            <person name="Perez J."/>
            <person name="Pradella S."/>
            <person name="Rachid S."/>
            <person name="Raddatz G."/>
            <person name="Rosenau F."/>
            <person name="Rueckert C."/>
            <person name="Sasse F."/>
            <person name="Scharfe M."/>
            <person name="Schuster S.C."/>
            <person name="Suen G."/>
            <person name="Treuner-Lange A."/>
            <person name="Velicer G.J."/>
            <person name="Vorholter F.-J."/>
            <person name="Weissman K.J."/>
            <person name="Welch R.D."/>
            <person name="Wenzel S.C."/>
            <person name="Whitworth D.E."/>
            <person name="Wilhelm S."/>
            <person name="Wittmann C."/>
            <person name="Bloecker H."/>
            <person name="Puehler A."/>
            <person name="Mueller R."/>
        </authorList>
    </citation>
    <scope>NUCLEOTIDE SEQUENCE [LARGE SCALE GENOMIC DNA]</scope>
    <source>
        <strain>So ce56</strain>
    </source>
</reference>
<keyword id="KW-0963">Cytoplasm</keyword>
<keyword id="KW-0441">Lipid A biosynthesis</keyword>
<keyword id="KW-0444">Lipid biosynthesis</keyword>
<keyword id="KW-0443">Lipid metabolism</keyword>
<keyword id="KW-0456">Lyase</keyword>
<keyword id="KW-1185">Reference proteome</keyword>
<accession>A9GEI9</accession>
<evidence type="ECO:0000255" key="1">
    <source>
        <dbReference type="HAMAP-Rule" id="MF_00406"/>
    </source>
</evidence>
<name>FABZ_SORC5</name>
<sequence length="155" mass="17461">MPERTQAPVTLDIHQILSILPHRYPLVMVDRVTEITANKCIRGYKCVAYNEPWFQGHFPQRPIMPGVLILESLTQLGGILAYASDPFDATSNLMFFLGIDKAKFRHTVTPGDRLDLYAEVLHHRSNVWKLRGEASVDGTLCAEGEMLASIVDREP</sequence>
<gene>
    <name evidence="1" type="primary">fabZ</name>
    <name type="ordered locus">sce2859</name>
</gene>